<comment type="function">
    <text evidence="1">Assembles around the rod to form the L-ring and probably protects the motor/basal body from shearing forces during rotation.</text>
</comment>
<comment type="subunit">
    <text evidence="1">The basal body constitutes a major portion of the flagellar organelle and consists of four rings (L,P,S, and M) mounted on a central rod.</text>
</comment>
<comment type="subcellular location">
    <subcellularLocation>
        <location evidence="1">Cell outer membrane</location>
        <topology evidence="1">Lipid-anchor</topology>
    </subcellularLocation>
    <subcellularLocation>
        <location evidence="1">Bacterial flagellum basal body</location>
    </subcellularLocation>
</comment>
<comment type="similarity">
    <text evidence="1">Belongs to the FlgH family.</text>
</comment>
<name>FLGH_ANASK</name>
<organism>
    <name type="scientific">Anaeromyxobacter sp. (strain K)</name>
    <dbReference type="NCBI Taxonomy" id="447217"/>
    <lineage>
        <taxon>Bacteria</taxon>
        <taxon>Pseudomonadati</taxon>
        <taxon>Myxococcota</taxon>
        <taxon>Myxococcia</taxon>
        <taxon>Myxococcales</taxon>
        <taxon>Cystobacterineae</taxon>
        <taxon>Anaeromyxobacteraceae</taxon>
        <taxon>Anaeromyxobacter</taxon>
    </lineage>
</organism>
<gene>
    <name evidence="1" type="primary">flgH</name>
    <name type="ordered locus">AnaeK_2508</name>
</gene>
<dbReference type="EMBL" id="CP001131">
    <property type="protein sequence ID" value="ACG73733.1"/>
    <property type="molecule type" value="Genomic_DNA"/>
</dbReference>
<dbReference type="RefSeq" id="WP_012526519.1">
    <property type="nucleotide sequence ID" value="NC_011145.1"/>
</dbReference>
<dbReference type="SMR" id="B4UG41"/>
<dbReference type="KEGG" id="ank:AnaeK_2508"/>
<dbReference type="HOGENOM" id="CLU_069313_1_1_7"/>
<dbReference type="OrthoDB" id="9789227at2"/>
<dbReference type="Proteomes" id="UP000001871">
    <property type="component" value="Chromosome"/>
</dbReference>
<dbReference type="GO" id="GO:0009427">
    <property type="term" value="C:bacterial-type flagellum basal body, distal rod, L ring"/>
    <property type="evidence" value="ECO:0007669"/>
    <property type="project" value="InterPro"/>
</dbReference>
<dbReference type="GO" id="GO:0009279">
    <property type="term" value="C:cell outer membrane"/>
    <property type="evidence" value="ECO:0007669"/>
    <property type="project" value="UniProtKB-SubCell"/>
</dbReference>
<dbReference type="GO" id="GO:0003774">
    <property type="term" value="F:cytoskeletal motor activity"/>
    <property type="evidence" value="ECO:0007669"/>
    <property type="project" value="InterPro"/>
</dbReference>
<dbReference type="GO" id="GO:0071973">
    <property type="term" value="P:bacterial-type flagellum-dependent cell motility"/>
    <property type="evidence" value="ECO:0007669"/>
    <property type="project" value="InterPro"/>
</dbReference>
<dbReference type="HAMAP" id="MF_00415">
    <property type="entry name" value="FlgH"/>
    <property type="match status" value="1"/>
</dbReference>
<dbReference type="InterPro" id="IPR000527">
    <property type="entry name" value="Flag_Lring"/>
</dbReference>
<dbReference type="PANTHER" id="PTHR34933">
    <property type="entry name" value="FLAGELLAR L-RING PROTEIN"/>
    <property type="match status" value="1"/>
</dbReference>
<dbReference type="PANTHER" id="PTHR34933:SF1">
    <property type="entry name" value="FLAGELLAR L-RING PROTEIN"/>
    <property type="match status" value="1"/>
</dbReference>
<dbReference type="Pfam" id="PF02107">
    <property type="entry name" value="FlgH"/>
    <property type="match status" value="1"/>
</dbReference>
<dbReference type="PRINTS" id="PR01008">
    <property type="entry name" value="FLGLRINGFLGH"/>
</dbReference>
<dbReference type="PROSITE" id="PS51257">
    <property type="entry name" value="PROKAR_LIPOPROTEIN"/>
    <property type="match status" value="1"/>
</dbReference>
<reference key="1">
    <citation type="submission" date="2008-08" db="EMBL/GenBank/DDBJ databases">
        <title>Complete sequence of Anaeromyxobacter sp. K.</title>
        <authorList>
            <consortium name="US DOE Joint Genome Institute"/>
            <person name="Lucas S."/>
            <person name="Copeland A."/>
            <person name="Lapidus A."/>
            <person name="Glavina del Rio T."/>
            <person name="Dalin E."/>
            <person name="Tice H."/>
            <person name="Bruce D."/>
            <person name="Goodwin L."/>
            <person name="Pitluck S."/>
            <person name="Saunders E."/>
            <person name="Brettin T."/>
            <person name="Detter J.C."/>
            <person name="Han C."/>
            <person name="Larimer F."/>
            <person name="Land M."/>
            <person name="Hauser L."/>
            <person name="Kyrpides N."/>
            <person name="Ovchinnikiva G."/>
            <person name="Beliaev A."/>
        </authorList>
    </citation>
    <scope>NUCLEOTIDE SEQUENCE [LARGE SCALE GENOMIC DNA]</scope>
    <source>
        <strain>K</strain>
    </source>
</reference>
<proteinExistence type="inferred from homology"/>
<feature type="signal peptide" evidence="1">
    <location>
        <begin position="1"/>
        <end position="23"/>
    </location>
</feature>
<feature type="chain" id="PRO_1000123939" description="Flagellar L-ring protein">
    <location>
        <begin position="24"/>
        <end position="229"/>
    </location>
</feature>
<feature type="lipid moiety-binding region" description="N-palmitoyl cysteine" evidence="1">
    <location>
        <position position="24"/>
    </location>
</feature>
<feature type="lipid moiety-binding region" description="S-diacylglycerol cysteine" evidence="1">
    <location>
        <position position="24"/>
    </location>
</feature>
<accession>B4UG41</accession>
<keyword id="KW-0975">Bacterial flagellum</keyword>
<keyword id="KW-0998">Cell outer membrane</keyword>
<keyword id="KW-0449">Lipoprotein</keyword>
<keyword id="KW-0472">Membrane</keyword>
<keyword id="KW-0564">Palmitate</keyword>
<keyword id="KW-0732">Signal</keyword>
<sequence length="229" mass="24614">MNPLTRVALAVAAFAALVLALSACGPAHVAGHVPKRRDYAVPDAAGQEAQAASAGSTWREGRAASMLYTDARALRVNDLVVVRIEEIADAKRSADTDLTRRSELNASIEAFLTSLDAPYALKGGATTGFKGLGSTARTERLTATVPAVVRKVLPNGNLFIEGHRVVLVNAEEQHFYISGVVRPIDIDQENGVKSSMVADAEIEFTGRGVLSDNQRQGWLSRLLGWFWPF</sequence>
<protein>
    <recommendedName>
        <fullName evidence="1">Flagellar L-ring protein</fullName>
    </recommendedName>
    <alternativeName>
        <fullName evidence="1">Basal body L-ring protein</fullName>
    </alternativeName>
</protein>
<evidence type="ECO:0000255" key="1">
    <source>
        <dbReference type="HAMAP-Rule" id="MF_00415"/>
    </source>
</evidence>